<organism>
    <name type="scientific">Streptococcus pneumoniae serotype 4 (strain ATCC BAA-334 / TIGR4)</name>
    <dbReference type="NCBI Taxonomy" id="170187"/>
    <lineage>
        <taxon>Bacteria</taxon>
        <taxon>Bacillati</taxon>
        <taxon>Bacillota</taxon>
        <taxon>Bacilli</taxon>
        <taxon>Lactobacillales</taxon>
        <taxon>Streptococcaceae</taxon>
        <taxon>Streptococcus</taxon>
    </lineage>
</organism>
<gene>
    <name evidence="1" type="primary">rplN</name>
    <name type="ordered locus">SP_0219</name>
</gene>
<protein>
    <recommendedName>
        <fullName evidence="1">Large ribosomal subunit protein uL14</fullName>
    </recommendedName>
    <alternativeName>
        <fullName evidence="2">50S ribosomal protein L14</fullName>
    </alternativeName>
</protein>
<feature type="chain" id="PRO_0000128560" description="Large ribosomal subunit protein uL14">
    <location>
        <begin position="1"/>
        <end position="122"/>
    </location>
</feature>
<reference key="1">
    <citation type="journal article" date="2000" name="Antimicrob. Agents Chemother.">
        <title>Mutations in ribosomal protein L16 conferring reduced susceptibility to evernimicin (SCH27899): implications for mechanism of action.</title>
        <authorList>
            <person name="Adrian P.V."/>
            <person name="Zhao W."/>
            <person name="Black T.A."/>
            <person name="Shaw K.J."/>
            <person name="Hare R.S."/>
            <person name="Klugman K.P."/>
        </authorList>
    </citation>
    <scope>NUCLEOTIDE SEQUENCE [GENOMIC DNA]</scope>
    <source>
        <strain>SP#5</strain>
        <strain>ZR1</strain>
    </source>
</reference>
<reference key="2">
    <citation type="journal article" date="2012" name="PLoS Genet.">
        <title>RsfA (YbeB) proteins are conserved ribosomal silencing factors.</title>
        <authorList>
            <person name="Hauser R."/>
            <person name="Pech M."/>
            <person name="Kijek J."/>
            <person name="Yamamoto H."/>
            <person name="Titz B."/>
            <person name="Naeve F."/>
            <person name="Tovchigrechko A."/>
            <person name="Yamamoto K."/>
            <person name="Szaflarski W."/>
            <person name="Takeuchi N."/>
            <person name="Stellberger T."/>
            <person name="Diefenbacher M.E."/>
            <person name="Nierhaus K.H."/>
            <person name="Uetz P."/>
        </authorList>
    </citation>
    <scope>INTERACTION WITH RSFS</scope>
    <source>
        <strain>ATCC BAA-334 / TIGR4</strain>
    </source>
</reference>
<reference key="3">
    <citation type="journal article" date="2001" name="Science">
        <title>Complete genome sequence of a virulent isolate of Streptococcus pneumoniae.</title>
        <authorList>
            <person name="Tettelin H."/>
            <person name="Nelson K.E."/>
            <person name="Paulsen I.T."/>
            <person name="Eisen J.A."/>
            <person name="Read T.D."/>
            <person name="Peterson S.N."/>
            <person name="Heidelberg J.F."/>
            <person name="DeBoy R.T."/>
            <person name="Haft D.H."/>
            <person name="Dodson R.J."/>
            <person name="Durkin A.S."/>
            <person name="Gwinn M.L."/>
            <person name="Kolonay J.F."/>
            <person name="Nelson W.C."/>
            <person name="Peterson J.D."/>
            <person name="Umayam L.A."/>
            <person name="White O."/>
            <person name="Salzberg S.L."/>
            <person name="Lewis M.R."/>
            <person name="Radune D."/>
            <person name="Holtzapple E.K."/>
            <person name="Khouri H.M."/>
            <person name="Wolf A.M."/>
            <person name="Utterback T.R."/>
            <person name="Hansen C.L."/>
            <person name="McDonald L.A."/>
            <person name="Feldblyum T.V."/>
            <person name="Angiuoli S.V."/>
            <person name="Dickinson T."/>
            <person name="Hickey E.K."/>
            <person name="Holt I.E."/>
            <person name="Loftus B.J."/>
            <person name="Yang F."/>
            <person name="Smith H.O."/>
            <person name="Venter J.C."/>
            <person name="Dougherty B.A."/>
            <person name="Morrison D.A."/>
            <person name="Hollingshead S.K."/>
            <person name="Fraser C.M."/>
        </authorList>
    </citation>
    <scope>NUCLEOTIDE SEQUENCE [LARGE SCALE GENOMIC DNA]</scope>
    <source>
        <strain>ATCC BAA-334 / TIGR4</strain>
    </source>
</reference>
<proteinExistence type="evidence at protein level"/>
<name>RL14_STRPN</name>
<accession>P0A473</accession>
<accession>Q9WVZ2</accession>
<sequence length="122" mass="13006">MIQTETRLKVADNSGAREILTIKVLGGSGRKFANIGDVIVASVKQATPGGAVKKGDVVKAVIVRTKSGARRADGSYIKFDENAAVIIREDKTPRGTRIFGPVARELREGGFMKIVSLAPEVL</sequence>
<comment type="function">
    <text evidence="1">Binds to 23S rRNA. Forms part of two intersubunit bridges in the 70S ribosome.</text>
</comment>
<comment type="subunit">
    <text evidence="1">Part of the 50S ribosomal subunit. Forms a cluster with proteins L3 and L19. In the 70S ribosome, L14 and L19 interact and together make contacts with the 16S rRNA in bridges B5 and B8. Can interact with ribosomal silencing factor RsfS, which may inhibit ribosomal subunit association (By similarity).</text>
</comment>
<comment type="similarity">
    <text evidence="1">Belongs to the universal ribosomal protein uL14 family.</text>
</comment>
<keyword id="KW-1185">Reference proteome</keyword>
<keyword id="KW-0687">Ribonucleoprotein</keyword>
<keyword id="KW-0689">Ribosomal protein</keyword>
<keyword id="KW-0694">RNA-binding</keyword>
<keyword id="KW-0699">rRNA-binding</keyword>
<evidence type="ECO:0000255" key="1">
    <source>
        <dbReference type="HAMAP-Rule" id="MF_01367"/>
    </source>
</evidence>
<evidence type="ECO:0000305" key="2"/>
<dbReference type="EMBL" id="AF126060">
    <property type="protein sequence ID" value="AAD33275.1"/>
    <property type="molecule type" value="Genomic_DNA"/>
</dbReference>
<dbReference type="EMBL" id="AF126061">
    <property type="protein sequence ID" value="AAD33284.1"/>
    <property type="molecule type" value="Genomic_DNA"/>
</dbReference>
<dbReference type="EMBL" id="AE005672">
    <property type="protein sequence ID" value="AAK74399.1"/>
    <property type="molecule type" value="Genomic_DNA"/>
</dbReference>
<dbReference type="PIR" id="F95025">
    <property type="entry name" value="F95025"/>
</dbReference>
<dbReference type="RefSeq" id="WP_000616545.1">
    <property type="nucleotide sequence ID" value="NZ_CP155539.1"/>
</dbReference>
<dbReference type="SMR" id="P0A473"/>
<dbReference type="PaxDb" id="170187-SP_0219"/>
<dbReference type="EnsemblBacteria" id="AAK74399">
    <property type="protein sequence ID" value="AAK74399"/>
    <property type="gene ID" value="SP_0219"/>
</dbReference>
<dbReference type="GeneID" id="93738967"/>
<dbReference type="KEGG" id="spn:SP_0219"/>
<dbReference type="eggNOG" id="COG0093">
    <property type="taxonomic scope" value="Bacteria"/>
</dbReference>
<dbReference type="PhylomeDB" id="P0A473"/>
<dbReference type="BioCyc" id="SPNE170187:G1FZB-224-MONOMER"/>
<dbReference type="Proteomes" id="UP000000585">
    <property type="component" value="Chromosome"/>
</dbReference>
<dbReference type="GO" id="GO:0022625">
    <property type="term" value="C:cytosolic large ribosomal subunit"/>
    <property type="evidence" value="ECO:0007669"/>
    <property type="project" value="TreeGrafter"/>
</dbReference>
<dbReference type="GO" id="GO:0070180">
    <property type="term" value="F:large ribosomal subunit rRNA binding"/>
    <property type="evidence" value="ECO:0007669"/>
    <property type="project" value="TreeGrafter"/>
</dbReference>
<dbReference type="GO" id="GO:0003735">
    <property type="term" value="F:structural constituent of ribosome"/>
    <property type="evidence" value="ECO:0007669"/>
    <property type="project" value="InterPro"/>
</dbReference>
<dbReference type="GO" id="GO:0006412">
    <property type="term" value="P:translation"/>
    <property type="evidence" value="ECO:0007669"/>
    <property type="project" value="UniProtKB-UniRule"/>
</dbReference>
<dbReference type="CDD" id="cd00337">
    <property type="entry name" value="Ribosomal_uL14"/>
    <property type="match status" value="1"/>
</dbReference>
<dbReference type="FunFam" id="2.40.150.20:FF:000001">
    <property type="entry name" value="50S ribosomal protein L14"/>
    <property type="match status" value="1"/>
</dbReference>
<dbReference type="Gene3D" id="2.40.150.20">
    <property type="entry name" value="Ribosomal protein L14"/>
    <property type="match status" value="1"/>
</dbReference>
<dbReference type="HAMAP" id="MF_01367">
    <property type="entry name" value="Ribosomal_uL14"/>
    <property type="match status" value="1"/>
</dbReference>
<dbReference type="InterPro" id="IPR000218">
    <property type="entry name" value="Ribosomal_uL14"/>
</dbReference>
<dbReference type="InterPro" id="IPR005745">
    <property type="entry name" value="Ribosomal_uL14_bac-type"/>
</dbReference>
<dbReference type="InterPro" id="IPR019972">
    <property type="entry name" value="Ribosomal_uL14_CS"/>
</dbReference>
<dbReference type="InterPro" id="IPR036853">
    <property type="entry name" value="Ribosomal_uL14_sf"/>
</dbReference>
<dbReference type="NCBIfam" id="TIGR01067">
    <property type="entry name" value="rplN_bact"/>
    <property type="match status" value="1"/>
</dbReference>
<dbReference type="PANTHER" id="PTHR11761">
    <property type="entry name" value="50S/60S RIBOSOMAL PROTEIN L14/L23"/>
    <property type="match status" value="1"/>
</dbReference>
<dbReference type="PANTHER" id="PTHR11761:SF3">
    <property type="entry name" value="LARGE RIBOSOMAL SUBUNIT PROTEIN UL14M"/>
    <property type="match status" value="1"/>
</dbReference>
<dbReference type="Pfam" id="PF00238">
    <property type="entry name" value="Ribosomal_L14"/>
    <property type="match status" value="1"/>
</dbReference>
<dbReference type="SMART" id="SM01374">
    <property type="entry name" value="Ribosomal_L14"/>
    <property type="match status" value="1"/>
</dbReference>
<dbReference type="SUPFAM" id="SSF50193">
    <property type="entry name" value="Ribosomal protein L14"/>
    <property type="match status" value="1"/>
</dbReference>
<dbReference type="PROSITE" id="PS00049">
    <property type="entry name" value="RIBOSOMAL_L14"/>
    <property type="match status" value="1"/>
</dbReference>